<organism>
    <name type="scientific">Shigella flexneri</name>
    <dbReference type="NCBI Taxonomy" id="623"/>
    <lineage>
        <taxon>Bacteria</taxon>
        <taxon>Pseudomonadati</taxon>
        <taxon>Pseudomonadota</taxon>
        <taxon>Gammaproteobacteria</taxon>
        <taxon>Enterobacterales</taxon>
        <taxon>Enterobacteriaceae</taxon>
        <taxon>Shigella</taxon>
    </lineage>
</organism>
<keyword id="KW-0029">Amino-acid transport</keyword>
<keyword id="KW-0050">Antiport</keyword>
<keyword id="KW-0997">Cell inner membrane</keyword>
<keyword id="KW-1003">Cell membrane</keyword>
<keyword id="KW-0472">Membrane</keyword>
<keyword id="KW-1185">Reference proteome</keyword>
<keyword id="KW-0812">Transmembrane</keyword>
<keyword id="KW-1133">Transmembrane helix</keyword>
<keyword id="KW-0813">Transport</keyword>
<gene>
    <name type="primary">ydgI</name>
    <name type="ordered locus">SF1626</name>
    <name type="ordered locus">S1758</name>
</gene>
<dbReference type="EMBL" id="AE005674">
    <property type="protein sequence ID" value="AAN43209.1"/>
    <property type="molecule type" value="Genomic_DNA"/>
</dbReference>
<dbReference type="EMBL" id="AE014073">
    <property type="protein sequence ID" value="AAP17097.1"/>
    <property type="molecule type" value="Genomic_DNA"/>
</dbReference>
<dbReference type="RefSeq" id="NP_707502.1">
    <property type="nucleotide sequence ID" value="NC_004337.2"/>
</dbReference>
<dbReference type="RefSeq" id="WP_000412379.1">
    <property type="nucleotide sequence ID" value="NZ_WPGW01000024.1"/>
</dbReference>
<dbReference type="SMR" id="P0AAE7"/>
<dbReference type="STRING" id="198214.SF1626"/>
<dbReference type="PaxDb" id="198214-SF1626"/>
<dbReference type="GeneID" id="1024796"/>
<dbReference type="KEGG" id="sfl:SF1626"/>
<dbReference type="KEGG" id="sfx:S1758"/>
<dbReference type="PATRIC" id="fig|198214.7.peg.1920"/>
<dbReference type="HOGENOM" id="CLU_007946_1_2_6"/>
<dbReference type="Proteomes" id="UP000001006">
    <property type="component" value="Chromosome"/>
</dbReference>
<dbReference type="Proteomes" id="UP000002673">
    <property type="component" value="Chromosome"/>
</dbReference>
<dbReference type="GO" id="GO:0005886">
    <property type="term" value="C:plasma membrane"/>
    <property type="evidence" value="ECO:0007669"/>
    <property type="project" value="UniProtKB-SubCell"/>
</dbReference>
<dbReference type="GO" id="GO:0015297">
    <property type="term" value="F:antiporter activity"/>
    <property type="evidence" value="ECO:0007669"/>
    <property type="project" value="UniProtKB-KW"/>
</dbReference>
<dbReference type="GO" id="GO:0006865">
    <property type="term" value="P:amino acid transport"/>
    <property type="evidence" value="ECO:0007669"/>
    <property type="project" value="UniProtKB-KW"/>
</dbReference>
<dbReference type="FunFam" id="1.20.1740.10:FF:000012">
    <property type="entry name" value="Arginine/ornithine antiporter transporter"/>
    <property type="match status" value="1"/>
</dbReference>
<dbReference type="Gene3D" id="1.20.1740.10">
    <property type="entry name" value="Amino acid/polyamine transporter I"/>
    <property type="match status" value="1"/>
</dbReference>
<dbReference type="InterPro" id="IPR002293">
    <property type="entry name" value="AA/rel_permease1"/>
</dbReference>
<dbReference type="InterPro" id="IPR004754">
    <property type="entry name" value="Amino_acid_antiprt"/>
</dbReference>
<dbReference type="InterPro" id="IPR050367">
    <property type="entry name" value="APC_superfamily"/>
</dbReference>
<dbReference type="NCBIfam" id="TIGR00905">
    <property type="entry name" value="2A0302"/>
    <property type="match status" value="1"/>
</dbReference>
<dbReference type="PANTHER" id="PTHR42770">
    <property type="entry name" value="AMINO ACID TRANSPORTER-RELATED"/>
    <property type="match status" value="1"/>
</dbReference>
<dbReference type="PANTHER" id="PTHR42770:SF4">
    <property type="entry name" value="ARGININE_ORNITHINE ANTIPORTER-RELATED"/>
    <property type="match status" value="1"/>
</dbReference>
<dbReference type="Pfam" id="PF13520">
    <property type="entry name" value="AA_permease_2"/>
    <property type="match status" value="1"/>
</dbReference>
<dbReference type="PIRSF" id="PIRSF006060">
    <property type="entry name" value="AA_transporter"/>
    <property type="match status" value="1"/>
</dbReference>
<comment type="function">
    <text evidence="2">Catalyzes electroneutral exchange between arginine and ornithine to allow high-efficiency energy conversion in the arginine deiminase pathway.</text>
</comment>
<comment type="catalytic activity">
    <reaction evidence="2">
        <text>L-ornithine(in) + L-arginine(out) = L-ornithine(out) + L-arginine(in)</text>
        <dbReference type="Rhea" id="RHEA:34991"/>
        <dbReference type="ChEBI" id="CHEBI:32682"/>
        <dbReference type="ChEBI" id="CHEBI:46911"/>
    </reaction>
    <physiologicalReaction direction="left-to-right" evidence="2">
        <dbReference type="Rhea" id="RHEA:34992"/>
    </physiologicalReaction>
</comment>
<comment type="subcellular location">
    <subcellularLocation>
        <location evidence="1">Cell inner membrane</location>
        <topology evidence="3">Multi-pass membrane protein</topology>
    </subcellularLocation>
</comment>
<comment type="similarity">
    <text evidence="4">Belongs to the amino acid-polyamine-organocation (APC) superfamily. Basic amino acid/polyamine antiporter (APA) (TC 2.A.3.2) family.</text>
</comment>
<name>ARCD_SHIFL</name>
<feature type="chain" id="PRO_0000054243" description="Putative arginine/ornithine antiporter">
    <location>
        <begin position="1"/>
        <end position="460"/>
    </location>
</feature>
<feature type="topological domain" description="Cytoplasmic" evidence="4">
    <location>
        <begin position="1"/>
        <end position="4"/>
    </location>
</feature>
<feature type="transmembrane region" description="Helical" evidence="3">
    <location>
        <begin position="5"/>
        <end position="25"/>
    </location>
</feature>
<feature type="topological domain" description="Periplasmic" evidence="4">
    <location>
        <begin position="26"/>
        <end position="38"/>
    </location>
</feature>
<feature type="transmembrane region" description="Helical" evidence="3">
    <location>
        <begin position="39"/>
        <end position="59"/>
    </location>
</feature>
<feature type="topological domain" description="Cytoplasmic" evidence="4">
    <location>
        <begin position="60"/>
        <end position="92"/>
    </location>
</feature>
<feature type="transmembrane region" description="Helical" evidence="3">
    <location>
        <begin position="93"/>
        <end position="113"/>
    </location>
</feature>
<feature type="topological domain" description="Periplasmic" evidence="4">
    <location>
        <begin position="114"/>
        <end position="125"/>
    </location>
</feature>
<feature type="transmembrane region" description="Helical" evidence="3">
    <location>
        <begin position="126"/>
        <end position="146"/>
    </location>
</feature>
<feature type="topological domain" description="Cytoplasmic" evidence="4">
    <location>
        <begin position="147"/>
        <end position="157"/>
    </location>
</feature>
<feature type="transmembrane region" description="Helical" evidence="3">
    <location>
        <begin position="158"/>
        <end position="178"/>
    </location>
</feature>
<feature type="topological domain" description="Periplasmic" evidence="4">
    <location>
        <begin position="179"/>
        <end position="201"/>
    </location>
</feature>
<feature type="transmembrane region" description="Helical" evidence="3">
    <location>
        <begin position="202"/>
        <end position="222"/>
    </location>
</feature>
<feature type="topological domain" description="Cytoplasmic" evidence="4">
    <location>
        <begin position="223"/>
        <end position="235"/>
    </location>
</feature>
<feature type="transmembrane region" description="Helical" evidence="3">
    <location>
        <begin position="236"/>
        <end position="256"/>
    </location>
</feature>
<feature type="topological domain" description="Periplasmic" evidence="4">
    <location>
        <begin position="257"/>
        <end position="282"/>
    </location>
</feature>
<feature type="transmembrane region" description="Helical" evidence="3">
    <location>
        <begin position="283"/>
        <end position="303"/>
    </location>
</feature>
<feature type="topological domain" description="Cytoplasmic" evidence="4">
    <location>
        <begin position="304"/>
        <end position="331"/>
    </location>
</feature>
<feature type="transmembrane region" description="Helical" evidence="3">
    <location>
        <begin position="332"/>
        <end position="352"/>
    </location>
</feature>
<feature type="topological domain" description="Periplasmic" evidence="4">
    <location>
        <begin position="353"/>
        <end position="357"/>
    </location>
</feature>
<feature type="transmembrane region" description="Helical" evidence="3">
    <location>
        <begin position="358"/>
        <end position="378"/>
    </location>
</feature>
<feature type="topological domain" description="Cytoplasmic" evidence="4">
    <location>
        <begin position="379"/>
        <end position="384"/>
    </location>
</feature>
<feature type="transmembrane region" description="Helical" evidence="3">
    <location>
        <begin position="385"/>
        <end position="405"/>
    </location>
</feature>
<feature type="transmembrane region" description="Helical" evidence="3">
    <location>
        <begin position="406"/>
        <end position="426"/>
    </location>
</feature>
<feature type="topological domain" description="Cytoplasmic" evidence="4">
    <location>
        <begin position="427"/>
        <end position="439"/>
    </location>
</feature>
<feature type="transmembrane region" description="Helical" evidence="3">
    <location>
        <begin position="440"/>
        <end position="460"/>
    </location>
</feature>
<accession>P0AAE7</accession>
<accession>P77429</accession>
<protein>
    <recommendedName>
        <fullName evidence="2">Putative arginine/ornithine antiporter</fullName>
    </recommendedName>
</protein>
<reference key="1">
    <citation type="journal article" date="2002" name="Nucleic Acids Res.">
        <title>Genome sequence of Shigella flexneri 2a: insights into pathogenicity through comparison with genomes of Escherichia coli K12 and O157.</title>
        <authorList>
            <person name="Jin Q."/>
            <person name="Yuan Z."/>
            <person name="Xu J."/>
            <person name="Wang Y."/>
            <person name="Shen Y."/>
            <person name="Lu W."/>
            <person name="Wang J."/>
            <person name="Liu H."/>
            <person name="Yang J."/>
            <person name="Yang F."/>
            <person name="Zhang X."/>
            <person name="Zhang J."/>
            <person name="Yang G."/>
            <person name="Wu H."/>
            <person name="Qu D."/>
            <person name="Dong J."/>
            <person name="Sun L."/>
            <person name="Xue Y."/>
            <person name="Zhao A."/>
            <person name="Gao Y."/>
            <person name="Zhu J."/>
            <person name="Kan B."/>
            <person name="Ding K."/>
            <person name="Chen S."/>
            <person name="Cheng H."/>
            <person name="Yao Z."/>
            <person name="He B."/>
            <person name="Chen R."/>
            <person name="Ma D."/>
            <person name="Qiang B."/>
            <person name="Wen Y."/>
            <person name="Hou Y."/>
            <person name="Yu J."/>
        </authorList>
    </citation>
    <scope>NUCLEOTIDE SEQUENCE [LARGE SCALE GENOMIC DNA]</scope>
    <source>
        <strain>301 / Serotype 2a</strain>
    </source>
</reference>
<reference key="2">
    <citation type="journal article" date="2003" name="Infect. Immun.">
        <title>Complete genome sequence and comparative genomics of Shigella flexneri serotype 2a strain 2457T.</title>
        <authorList>
            <person name="Wei J."/>
            <person name="Goldberg M.B."/>
            <person name="Burland V."/>
            <person name="Venkatesan M.M."/>
            <person name="Deng W."/>
            <person name="Fournier G."/>
            <person name="Mayhew G.F."/>
            <person name="Plunkett G. III"/>
            <person name="Rose D.J."/>
            <person name="Darling A."/>
            <person name="Mau B."/>
            <person name="Perna N.T."/>
            <person name="Payne S.M."/>
            <person name="Runyen-Janecky L.J."/>
            <person name="Zhou S."/>
            <person name="Schwartz D.C."/>
            <person name="Blattner F.R."/>
        </authorList>
    </citation>
    <scope>NUCLEOTIDE SEQUENCE [LARGE SCALE GENOMIC DNA]</scope>
    <source>
        <strain>ATCC 700930 / 2457T / Serotype 2a</strain>
    </source>
</reference>
<proteinExistence type="inferred from homology"/>
<sequence length="460" mass="49501">MEKKLGLSALTALVLSSMLGAGVFSLPQNMAAVASPAALLIGWGITGAGILLLAFAMLILTRIRPELDGGIFTYAREGFGELIGFCSAWGYWLCAVIANVSYLVIVFSALSFFTDTPELRLFGDGNTWQSIVGASALLWIVHFLILRGVQTAASINLVATLAKLLPLGLFVVLAMMMFKLDTFKLDFTGLALGVPVWEQVKNTMLITLWVFIGVEGAVVVSARARNKRDVGKATLLAVLSALGVYLLVTLLSLGVVARPELAEIRNPSMAGLMVEMMGPWGEIIIAAGLIVSVCGAYLSWTIMAAEVPFLAATHKAFPRIFARQNAQAAPSASLWLTNICVQICLVLIWLTGSDYNTLLTIASEMILVPYFLVGAFLLKIATRPLHKAVGVGACIYGLWLLYASGPMHLLLSVVLYAPGLLVFLYARKTHTHDNVLNRQEMVLIGMLLIASVPATWMLVG</sequence>
<evidence type="ECO:0000250" key="1">
    <source>
        <dbReference type="UniProtKB" id="P0AAE5"/>
    </source>
</evidence>
<evidence type="ECO:0000250" key="2">
    <source>
        <dbReference type="UniProtKB" id="P18275"/>
    </source>
</evidence>
<evidence type="ECO:0000255" key="3"/>
<evidence type="ECO:0000305" key="4"/>